<proteinExistence type="inferred from homology"/>
<comment type="function">
    <text evidence="1">Functions in the N-end rule pathway of protein degradation where it conjugates Leu, Phe and, less efficiently, Met from aminoacyl-tRNAs to the N-termini of proteins containing an N-terminal arginine or lysine.</text>
</comment>
<comment type="catalytic activity">
    <reaction evidence="1">
        <text>N-terminal L-lysyl-[protein] + L-leucyl-tRNA(Leu) = N-terminal L-leucyl-L-lysyl-[protein] + tRNA(Leu) + H(+)</text>
        <dbReference type="Rhea" id="RHEA:12340"/>
        <dbReference type="Rhea" id="RHEA-COMP:9613"/>
        <dbReference type="Rhea" id="RHEA-COMP:9622"/>
        <dbReference type="Rhea" id="RHEA-COMP:12670"/>
        <dbReference type="Rhea" id="RHEA-COMP:12671"/>
        <dbReference type="ChEBI" id="CHEBI:15378"/>
        <dbReference type="ChEBI" id="CHEBI:65249"/>
        <dbReference type="ChEBI" id="CHEBI:78442"/>
        <dbReference type="ChEBI" id="CHEBI:78494"/>
        <dbReference type="ChEBI" id="CHEBI:133043"/>
        <dbReference type="EC" id="2.3.2.6"/>
    </reaction>
</comment>
<comment type="catalytic activity">
    <reaction evidence="1">
        <text>N-terminal L-arginyl-[protein] + L-leucyl-tRNA(Leu) = N-terminal L-leucyl-L-arginyl-[protein] + tRNA(Leu) + H(+)</text>
        <dbReference type="Rhea" id="RHEA:50416"/>
        <dbReference type="Rhea" id="RHEA-COMP:9613"/>
        <dbReference type="Rhea" id="RHEA-COMP:9622"/>
        <dbReference type="Rhea" id="RHEA-COMP:12672"/>
        <dbReference type="Rhea" id="RHEA-COMP:12673"/>
        <dbReference type="ChEBI" id="CHEBI:15378"/>
        <dbReference type="ChEBI" id="CHEBI:64719"/>
        <dbReference type="ChEBI" id="CHEBI:78442"/>
        <dbReference type="ChEBI" id="CHEBI:78494"/>
        <dbReference type="ChEBI" id="CHEBI:133044"/>
        <dbReference type="EC" id="2.3.2.6"/>
    </reaction>
</comment>
<comment type="catalytic activity">
    <reaction evidence="1">
        <text>L-phenylalanyl-tRNA(Phe) + an N-terminal L-alpha-aminoacyl-[protein] = an N-terminal L-phenylalanyl-L-alpha-aminoacyl-[protein] + tRNA(Phe)</text>
        <dbReference type="Rhea" id="RHEA:43632"/>
        <dbReference type="Rhea" id="RHEA-COMP:9668"/>
        <dbReference type="Rhea" id="RHEA-COMP:9699"/>
        <dbReference type="Rhea" id="RHEA-COMP:10636"/>
        <dbReference type="Rhea" id="RHEA-COMP:10637"/>
        <dbReference type="ChEBI" id="CHEBI:78442"/>
        <dbReference type="ChEBI" id="CHEBI:78531"/>
        <dbReference type="ChEBI" id="CHEBI:78597"/>
        <dbReference type="ChEBI" id="CHEBI:83561"/>
        <dbReference type="EC" id="2.3.2.6"/>
    </reaction>
</comment>
<comment type="subcellular location">
    <subcellularLocation>
        <location evidence="1">Cytoplasm</location>
    </subcellularLocation>
</comment>
<comment type="similarity">
    <text evidence="1">Belongs to the L/F-transferase family.</text>
</comment>
<name>LFTR_CHRVO</name>
<reference key="1">
    <citation type="journal article" date="2003" name="Proc. Natl. Acad. Sci. U.S.A.">
        <title>The complete genome sequence of Chromobacterium violaceum reveals remarkable and exploitable bacterial adaptability.</title>
        <authorList>
            <person name="Vasconcelos A.T.R."/>
            <person name="de Almeida D.F."/>
            <person name="Hungria M."/>
            <person name="Guimaraes C.T."/>
            <person name="Antonio R.V."/>
            <person name="Almeida F.C."/>
            <person name="de Almeida L.G.P."/>
            <person name="de Almeida R."/>
            <person name="Alves-Gomes J.A."/>
            <person name="Andrade E.M."/>
            <person name="Araripe J."/>
            <person name="de Araujo M.F.F."/>
            <person name="Astolfi-Filho S."/>
            <person name="Azevedo V."/>
            <person name="Baptista A.J."/>
            <person name="Bataus L.A.M."/>
            <person name="Batista J.S."/>
            <person name="Belo A."/>
            <person name="van den Berg C."/>
            <person name="Bogo M."/>
            <person name="Bonatto S."/>
            <person name="Bordignon J."/>
            <person name="Brigido M.M."/>
            <person name="Brito C.A."/>
            <person name="Brocchi M."/>
            <person name="Burity H.A."/>
            <person name="Camargo A.A."/>
            <person name="Cardoso D.D.P."/>
            <person name="Carneiro N.P."/>
            <person name="Carraro D.M."/>
            <person name="Carvalho C.M.B."/>
            <person name="Cascardo J.C.M."/>
            <person name="Cavada B.S."/>
            <person name="Chueire L.M.O."/>
            <person name="Creczynski-Pasa T.B."/>
            <person name="Cunha-Junior N.C."/>
            <person name="Fagundes N."/>
            <person name="Falcao C.L."/>
            <person name="Fantinatti F."/>
            <person name="Farias I.P."/>
            <person name="Felipe M.S.S."/>
            <person name="Ferrari L.P."/>
            <person name="Ferro J.A."/>
            <person name="Ferro M.I.T."/>
            <person name="Franco G.R."/>
            <person name="Freitas N.S.A."/>
            <person name="Furlan L.R."/>
            <person name="Gazzinelli R.T."/>
            <person name="Gomes E.A."/>
            <person name="Goncalves P.R."/>
            <person name="Grangeiro T.B."/>
            <person name="Grattapaglia D."/>
            <person name="Grisard E.C."/>
            <person name="Hanna E.S."/>
            <person name="Jardim S.N."/>
            <person name="Laurino J."/>
            <person name="Leoi L.C.T."/>
            <person name="Lima L.F.A."/>
            <person name="Loureiro M.F."/>
            <person name="Lyra M.C.C.P."/>
            <person name="Madeira H.M.F."/>
            <person name="Manfio G.P."/>
            <person name="Maranhao A.Q."/>
            <person name="Martins W.S."/>
            <person name="di Mauro S.M.Z."/>
            <person name="de Medeiros S.R.B."/>
            <person name="Meissner R.V."/>
            <person name="Moreira M.A.M."/>
            <person name="Nascimento F.F."/>
            <person name="Nicolas M.F."/>
            <person name="Oliveira J.G."/>
            <person name="Oliveira S.C."/>
            <person name="Paixao R.F.C."/>
            <person name="Parente J.A."/>
            <person name="Pedrosa F.O."/>
            <person name="Pena S.D.J."/>
            <person name="Pereira J.O."/>
            <person name="Pereira M."/>
            <person name="Pinto L.S.R.C."/>
            <person name="Pinto L.S."/>
            <person name="Porto J.I.R."/>
            <person name="Potrich D.P."/>
            <person name="Ramalho-Neto C.E."/>
            <person name="Reis A.M.M."/>
            <person name="Rigo L.U."/>
            <person name="Rondinelli E."/>
            <person name="Santos E.B.P."/>
            <person name="Santos F.R."/>
            <person name="Schneider M.P.C."/>
            <person name="Seuanez H.N."/>
            <person name="Silva A.M.R."/>
            <person name="da Silva A.L.C."/>
            <person name="Silva D.W."/>
            <person name="Silva R."/>
            <person name="Simoes I.C."/>
            <person name="Simon D."/>
            <person name="Soares C.M.A."/>
            <person name="Soares R.B.A."/>
            <person name="Souza E.M."/>
            <person name="Souza K.R.L."/>
            <person name="Souza R.C."/>
            <person name="Steffens M.B.R."/>
            <person name="Steindel M."/>
            <person name="Teixeira S.R."/>
            <person name="Urmenyi T."/>
            <person name="Vettore A."/>
            <person name="Wassem R."/>
            <person name="Zaha A."/>
            <person name="Simpson A.J.G."/>
        </authorList>
    </citation>
    <scope>NUCLEOTIDE SEQUENCE [LARGE SCALE GENOMIC DNA]</scope>
    <source>
        <strain>ATCC 12472 / DSM 30191 / JCM 1249 / CCUG 213 / NBRC 12614 / NCIMB 9131 / NCTC 9757 / MK</strain>
    </source>
</reference>
<gene>
    <name evidence="1" type="primary">aat</name>
    <name type="ordered locus">CV_1798</name>
</gene>
<organism>
    <name type="scientific">Chromobacterium violaceum (strain ATCC 12472 / DSM 30191 / JCM 1249 / CCUG 213 / NBRC 12614 / NCIMB 9131 / NCTC 9757 / MK)</name>
    <dbReference type="NCBI Taxonomy" id="243365"/>
    <lineage>
        <taxon>Bacteria</taxon>
        <taxon>Pseudomonadati</taxon>
        <taxon>Pseudomonadota</taxon>
        <taxon>Betaproteobacteria</taxon>
        <taxon>Neisseriales</taxon>
        <taxon>Chromobacteriaceae</taxon>
        <taxon>Chromobacterium</taxon>
    </lineage>
</organism>
<protein>
    <recommendedName>
        <fullName evidence="1">Leucyl/phenylalanyl-tRNA--protein transferase</fullName>
        <ecNumber evidence="1">2.3.2.6</ecNumber>
    </recommendedName>
    <alternativeName>
        <fullName evidence="1">L/F-transferase</fullName>
    </alternativeName>
    <alternativeName>
        <fullName evidence="1">Leucyltransferase</fullName>
    </alternativeName>
    <alternativeName>
        <fullName evidence="1">Phenyalanyltransferase</fullName>
    </alternativeName>
</protein>
<feature type="chain" id="PRO_0000207213" description="Leucyl/phenylalanyl-tRNA--protein transferase">
    <location>
        <begin position="1"/>
        <end position="233"/>
    </location>
</feature>
<accession>Q7NX31</accession>
<sequence>MIPWLGPEPVFPPVSQALSHPNGLLAAGGDLSSRRILTAYSEGIFPWFSDGEPILWWSPAPRMVMFPDELKVSRSLAKTLRNLDYEIRVDSAFPEVMRACAEPRAGQDGTWIVPEMVAAYCRLHQIGYAHSFETWIDGELAGGLYGVSIGRMFYGESMFSRRRDASKLAFVHMVRHLQAQGVTMIDCQMHTEHLASLGARLISRDVFLATLKENVRHPQPDRMWDYHYRHESS</sequence>
<evidence type="ECO:0000255" key="1">
    <source>
        <dbReference type="HAMAP-Rule" id="MF_00688"/>
    </source>
</evidence>
<keyword id="KW-0012">Acyltransferase</keyword>
<keyword id="KW-0963">Cytoplasm</keyword>
<keyword id="KW-1185">Reference proteome</keyword>
<keyword id="KW-0808">Transferase</keyword>
<dbReference type="EC" id="2.3.2.6" evidence="1"/>
<dbReference type="EMBL" id="AE016825">
    <property type="protein sequence ID" value="AAQ59472.1"/>
    <property type="molecule type" value="Genomic_DNA"/>
</dbReference>
<dbReference type="RefSeq" id="WP_011135350.1">
    <property type="nucleotide sequence ID" value="NC_005085.1"/>
</dbReference>
<dbReference type="SMR" id="Q7NX31"/>
<dbReference type="STRING" id="243365.CV_1798"/>
<dbReference type="KEGG" id="cvi:CV_1798"/>
<dbReference type="eggNOG" id="COG2360">
    <property type="taxonomic scope" value="Bacteria"/>
</dbReference>
<dbReference type="HOGENOM" id="CLU_075045_0_0_4"/>
<dbReference type="OrthoDB" id="9790282at2"/>
<dbReference type="Proteomes" id="UP000001424">
    <property type="component" value="Chromosome"/>
</dbReference>
<dbReference type="GO" id="GO:0005737">
    <property type="term" value="C:cytoplasm"/>
    <property type="evidence" value="ECO:0007669"/>
    <property type="project" value="UniProtKB-SubCell"/>
</dbReference>
<dbReference type="GO" id="GO:0008914">
    <property type="term" value="F:leucyl-tRNA--protein transferase activity"/>
    <property type="evidence" value="ECO:0007669"/>
    <property type="project" value="UniProtKB-UniRule"/>
</dbReference>
<dbReference type="GO" id="GO:0030163">
    <property type="term" value="P:protein catabolic process"/>
    <property type="evidence" value="ECO:0007669"/>
    <property type="project" value="UniProtKB-UniRule"/>
</dbReference>
<dbReference type="FunFam" id="3.30.70.3550:FF:000001">
    <property type="entry name" value="Leucyl/phenylalanyl-tRNA--protein transferase"/>
    <property type="match status" value="1"/>
</dbReference>
<dbReference type="FunFam" id="3.40.630.70:FF:000001">
    <property type="entry name" value="Leucyl/phenylalanyl-tRNA--protein transferase"/>
    <property type="match status" value="1"/>
</dbReference>
<dbReference type="Gene3D" id="3.40.630.70">
    <property type="entry name" value="Leucyl/phenylalanyl-tRNA-protein transferase, C-terminal domain"/>
    <property type="match status" value="1"/>
</dbReference>
<dbReference type="Gene3D" id="3.30.70.3550">
    <property type="entry name" value="Leucyl/phenylalanyl-tRNA-protein transferase, N-terminal domain"/>
    <property type="match status" value="1"/>
</dbReference>
<dbReference type="HAMAP" id="MF_00688">
    <property type="entry name" value="Leu_Phe_trans"/>
    <property type="match status" value="1"/>
</dbReference>
<dbReference type="InterPro" id="IPR016181">
    <property type="entry name" value="Acyl_CoA_acyltransferase"/>
</dbReference>
<dbReference type="InterPro" id="IPR004616">
    <property type="entry name" value="Leu/Phe-tRNA_Trfase"/>
</dbReference>
<dbReference type="InterPro" id="IPR042203">
    <property type="entry name" value="Leu/Phe-tRNA_Trfase_C"/>
</dbReference>
<dbReference type="InterPro" id="IPR042221">
    <property type="entry name" value="Leu/Phe-tRNA_Trfase_N"/>
</dbReference>
<dbReference type="NCBIfam" id="TIGR00667">
    <property type="entry name" value="aat"/>
    <property type="match status" value="1"/>
</dbReference>
<dbReference type="PANTHER" id="PTHR30098">
    <property type="entry name" value="LEUCYL/PHENYLALANYL-TRNA--PROTEIN TRANSFERASE"/>
    <property type="match status" value="1"/>
</dbReference>
<dbReference type="PANTHER" id="PTHR30098:SF2">
    <property type="entry name" value="LEUCYL_PHENYLALANYL-TRNA--PROTEIN TRANSFERASE"/>
    <property type="match status" value="1"/>
</dbReference>
<dbReference type="Pfam" id="PF03588">
    <property type="entry name" value="Leu_Phe_trans"/>
    <property type="match status" value="1"/>
</dbReference>
<dbReference type="SUPFAM" id="SSF55729">
    <property type="entry name" value="Acyl-CoA N-acyltransferases (Nat)"/>
    <property type="match status" value="1"/>
</dbReference>